<protein>
    <recommendedName>
        <fullName>Gap junction beta-1 protein</fullName>
    </recommendedName>
    <alternativeName>
        <fullName>Connexin-32</fullName>
        <shortName>Cx32</shortName>
    </alternativeName>
</protein>
<reference key="1">
    <citation type="journal article" date="1991" name="Dev. Biol.">
        <title>Developmental regulation of gap junction gene expression during mouse embryonic development.</title>
        <authorList>
            <person name="Nishi M."/>
            <person name="Kumar N.M."/>
            <person name="Gilula N.B."/>
        </authorList>
    </citation>
    <scope>NUCLEOTIDE SEQUENCE [MRNA]</scope>
</reference>
<reference key="2">
    <citation type="journal article" date="1992" name="Eur. J. Cell Biol.">
        <title>Molecular cloning of mouse connexins26 and -32: similar genomic organization but distinct promoter sequences of two gap junction genes.</title>
        <authorList>
            <person name="Willecke K."/>
            <person name="Nicholson B.J."/>
            <person name="Dahl E."/>
            <person name="Kozjek G."/>
            <person name="Hennemann H."/>
        </authorList>
    </citation>
    <scope>NUCLEOTIDE SEQUENCE [GENOMIC DNA]</scope>
</reference>
<reference key="3">
    <citation type="submission" date="2000-02" db="EMBL/GenBank/DDBJ databases">
        <title>A new alternatively spliced transcript of the mouse connexin32 gene is expressed in embryonic stem cells, oocytes and liver.</title>
        <authorList>
            <person name="Soehl G."/>
            <person name="Theis M."/>
            <person name="Hallas G."/>
            <person name="Brambach S."/>
            <person name="Dahl E."/>
            <person name="Kidder G."/>
            <person name="Willecke K."/>
        </authorList>
    </citation>
    <scope>NUCLEOTIDE SEQUENCE [GENOMIC DNA]</scope>
    <source>
        <tissue>Liver</tissue>
    </source>
</reference>
<reference key="4">
    <citation type="journal article" date="2004" name="Genome Res.">
        <title>The status, quality, and expansion of the NIH full-length cDNA project: the Mammalian Gene Collection (MGC).</title>
        <authorList>
            <consortium name="The MGC Project Team"/>
        </authorList>
    </citation>
    <scope>NUCLEOTIDE SEQUENCE [LARGE SCALE MRNA]</scope>
    <source>
        <strain>C57BL/6J</strain>
        <tissue>Mammary tumor</tissue>
    </source>
</reference>
<reference key="5">
    <citation type="journal article" date="2003" name="J. Neurosci.">
        <title>Connexins are critical for normal myelination in the CNS.</title>
        <authorList>
            <person name="Menichella D.M."/>
            <person name="Goodenough D.A."/>
            <person name="Sirkowski E."/>
            <person name="Scherer S.S."/>
            <person name="Paul D.L."/>
        </authorList>
    </citation>
    <scope>DISRUPTION PHENOTYPE</scope>
</reference>
<reference key="6">
    <citation type="journal article" date="2008" name="J. Proteome Res.">
        <title>Specific phosphopeptide enrichment with immobilized titanium ion affinity chromatography adsorbent for phosphoproteome analysis.</title>
        <authorList>
            <person name="Zhou H."/>
            <person name="Ye M."/>
            <person name="Dong J."/>
            <person name="Han G."/>
            <person name="Jiang X."/>
            <person name="Wu R."/>
            <person name="Zou H."/>
        </authorList>
    </citation>
    <scope>PHOSPHORYLATION [LARGE SCALE ANALYSIS] AT SER-258 AND SER-266</scope>
    <scope>IDENTIFICATION BY MASS SPECTROMETRY [LARGE SCALE ANALYSIS]</scope>
    <source>
        <tissue>Liver</tissue>
    </source>
</reference>
<reference key="7">
    <citation type="journal article" date="2010" name="Hum. Mol. Genet.">
        <title>Consortin, a trans-Golgi network cargo receptor for the plasma membrane targeting and recycling of connexins.</title>
        <authorList>
            <person name="del Castillo F.J."/>
            <person name="Cohen-Salmon M."/>
            <person name="Charollais A."/>
            <person name="Caille D."/>
            <person name="Lampe P.D."/>
            <person name="Chavrier P."/>
            <person name="Meda P."/>
            <person name="Petit C."/>
        </authorList>
    </citation>
    <scope>INTERACTION WITH CNST</scope>
</reference>
<sequence>MNWTGLYTLLSGVNRHSTAIGRVWLSVIFIFRIMVLVVAAESVWGDEKSSFICNTLQPGCNSVCYDHFFPISHVRLWSLQLILVSTPALLVAMHVAHQQHIEKKMLRLEGHGDPLHLEEVKRHKVHISGTLWWTYVISVVFRLLFEAVFMYVFYLLYPGYAMVRLVKCEAFPCPNTVDCFVSRPTEKTVFTVFMLAASGICIILNVAEVVYLIIRACARRAQRRSNPPSRKGSGFGHRLSPEYKQNEINKLLSEQDGSLKDILRRSPGTGAGLAEKSDRCSAC</sequence>
<gene>
    <name type="primary">Gjb1</name>
    <name type="synonym">Cxn-32</name>
</gene>
<evidence type="ECO:0000250" key="1">
    <source>
        <dbReference type="UniProtKB" id="P08033"/>
    </source>
</evidence>
<evidence type="ECO:0000250" key="2">
    <source>
        <dbReference type="UniProtKB" id="P08034"/>
    </source>
</evidence>
<evidence type="ECO:0000255" key="3"/>
<evidence type="ECO:0000269" key="4">
    <source>
    </source>
</evidence>
<evidence type="ECO:0000269" key="5">
    <source>
    </source>
</evidence>
<evidence type="ECO:0000305" key="6"/>
<evidence type="ECO:0007744" key="7">
    <source>
    </source>
</evidence>
<proteinExistence type="evidence at protein level"/>
<comment type="function">
    <text>One gap junction consists of a cluster of closely packed pairs of transmembrane channels, the connexons, through which materials of low MW diffuse from one cell to a neighboring cell.</text>
</comment>
<comment type="subunit">
    <text evidence="5">A connexon is composed of a hexamer of connexins. Interacts with CNST.</text>
</comment>
<comment type="subcellular location">
    <subcellularLocation>
        <location>Cell membrane</location>
        <topology>Multi-pass membrane protein</topology>
    </subcellularLocation>
    <subcellularLocation>
        <location>Cell junction</location>
        <location>Gap junction</location>
    </subcellularLocation>
</comment>
<comment type="disruption phenotype">
    <text evidence="4">Mice lacking both Gja12 and Gjb1 display a severe demyelination phenotype associated with oligodendrocyte death. These mice develop action tremors, tonic seizures, sporadic convulsions and loss of consciousness preceding death in the sixth week after birth.</text>
</comment>
<comment type="similarity">
    <text evidence="6">Belongs to the connexin family. Beta-type (group I) subfamily.</text>
</comment>
<accession>P28230</accession>
<feature type="chain" id="PRO_0000057851" description="Gap junction beta-1 protein">
    <location>
        <begin position="1"/>
        <end position="283"/>
    </location>
</feature>
<feature type="topological domain" description="Cytoplasmic" evidence="3">
    <location>
        <begin position="1"/>
        <end position="22"/>
    </location>
</feature>
<feature type="transmembrane region" description="Helical" evidence="3">
    <location>
        <begin position="23"/>
        <end position="45"/>
    </location>
</feature>
<feature type="topological domain" description="Extracellular" evidence="3">
    <location>
        <begin position="46"/>
        <end position="75"/>
    </location>
</feature>
<feature type="transmembrane region" description="Helical" evidence="3">
    <location>
        <begin position="76"/>
        <end position="95"/>
    </location>
</feature>
<feature type="topological domain" description="Cytoplasmic" evidence="3">
    <location>
        <begin position="96"/>
        <end position="130"/>
    </location>
</feature>
<feature type="transmembrane region" description="Helical" evidence="3">
    <location>
        <begin position="131"/>
        <end position="153"/>
    </location>
</feature>
<feature type="topological domain" description="Extracellular" evidence="3">
    <location>
        <begin position="154"/>
        <end position="191"/>
    </location>
</feature>
<feature type="transmembrane region" description="Helical" evidence="3">
    <location>
        <begin position="192"/>
        <end position="214"/>
    </location>
</feature>
<feature type="topological domain" description="Cytoplasmic" evidence="3">
    <location>
        <begin position="215"/>
        <end position="283"/>
    </location>
</feature>
<feature type="modified residue" description="Phosphoserine" evidence="1">
    <location>
        <position position="233"/>
    </location>
</feature>
<feature type="modified residue" description="Phosphoserine" evidence="7">
    <location>
        <position position="258"/>
    </location>
</feature>
<feature type="modified residue" description="Phosphoserine" evidence="7">
    <location>
        <position position="266"/>
    </location>
</feature>
<feature type="modified residue" description="Phosphoserine" evidence="2">
    <location>
        <position position="277"/>
    </location>
</feature>
<feature type="sequence conflict" description="In Ref. 1; AAA37296." evidence="6" ref="1">
    <original>F</original>
    <variation>S</variation>
    <location>
        <position position="235"/>
    </location>
</feature>
<feature type="sequence conflict" description="In Ref. 1; AAA37296." evidence="6" ref="1">
    <original>LRRS</original>
    <variation>PXPH</variation>
    <location>
        <begin position="263"/>
        <end position="266"/>
    </location>
</feature>
<keyword id="KW-0965">Cell junction</keyword>
<keyword id="KW-1003">Cell membrane</keyword>
<keyword id="KW-0303">Gap junction</keyword>
<keyword id="KW-0472">Membrane</keyword>
<keyword id="KW-0597">Phosphoprotein</keyword>
<keyword id="KW-1185">Reference proteome</keyword>
<keyword id="KW-0812">Transmembrane</keyword>
<keyword id="KW-1133">Transmembrane helix</keyword>
<dbReference type="EMBL" id="M63802">
    <property type="protein sequence ID" value="AAA37296.2"/>
    <property type="molecule type" value="mRNA"/>
</dbReference>
<dbReference type="EMBL" id="M81447">
    <property type="protein sequence ID" value="AAA37496.1"/>
    <property type="molecule type" value="Genomic_DNA"/>
</dbReference>
<dbReference type="EMBL" id="AJ271753">
    <property type="protein sequence ID" value="CAB72446.1"/>
    <property type="molecule type" value="Genomic_DNA"/>
</dbReference>
<dbReference type="EMBL" id="BC026833">
    <property type="protein sequence ID" value="AAH26833.1"/>
    <property type="molecule type" value="mRNA"/>
</dbReference>
<dbReference type="CCDS" id="CCDS30314.1"/>
<dbReference type="PIR" id="B49769">
    <property type="entry name" value="B49769"/>
</dbReference>
<dbReference type="RefSeq" id="NP_001289425.1">
    <property type="nucleotide sequence ID" value="NM_001302496.1"/>
</dbReference>
<dbReference type="RefSeq" id="NP_001289426.1">
    <property type="nucleotide sequence ID" value="NM_001302497.1"/>
</dbReference>
<dbReference type="RefSeq" id="NP_001289427.1">
    <property type="nucleotide sequence ID" value="NM_001302498.1"/>
</dbReference>
<dbReference type="RefSeq" id="NP_032150.2">
    <property type="nucleotide sequence ID" value="NM_008124.3"/>
</dbReference>
<dbReference type="RefSeq" id="XP_030107087.1">
    <property type="nucleotide sequence ID" value="XM_030251227.2"/>
</dbReference>
<dbReference type="SMR" id="P28230"/>
<dbReference type="BioGRID" id="199931">
    <property type="interactions" value="1"/>
</dbReference>
<dbReference type="FunCoup" id="P28230">
    <property type="interactions" value="34"/>
</dbReference>
<dbReference type="IntAct" id="P28230">
    <property type="interactions" value="1"/>
</dbReference>
<dbReference type="STRING" id="10090.ENSMUSP00000113516"/>
<dbReference type="iPTMnet" id="P28230"/>
<dbReference type="PhosphoSitePlus" id="P28230"/>
<dbReference type="SwissPalm" id="P28230"/>
<dbReference type="jPOST" id="P28230"/>
<dbReference type="PaxDb" id="10090-ENSMUSP00000062723"/>
<dbReference type="ProteomicsDB" id="284073"/>
<dbReference type="Antibodypedia" id="542">
    <property type="antibodies" value="578 antibodies from 33 providers"/>
</dbReference>
<dbReference type="DNASU" id="14618"/>
<dbReference type="Ensembl" id="ENSMUST00000052130.14">
    <property type="protein sequence ID" value="ENSMUSP00000062723.8"/>
    <property type="gene ID" value="ENSMUSG00000047797.15"/>
</dbReference>
<dbReference type="Ensembl" id="ENSMUST00000119080.8">
    <property type="protein sequence ID" value="ENSMUSP00000113904.2"/>
    <property type="gene ID" value="ENSMUSG00000047797.15"/>
</dbReference>
<dbReference type="Ensembl" id="ENSMUST00000119190.2">
    <property type="protein sequence ID" value="ENSMUSP00000113516.2"/>
    <property type="gene ID" value="ENSMUSG00000047797.15"/>
</dbReference>
<dbReference type="GeneID" id="14618"/>
<dbReference type="KEGG" id="mmu:14618"/>
<dbReference type="UCSC" id="uc009txk.2">
    <property type="organism name" value="mouse"/>
</dbReference>
<dbReference type="AGR" id="MGI:95719"/>
<dbReference type="CTD" id="2705"/>
<dbReference type="MGI" id="MGI:95719">
    <property type="gene designation" value="Gjb1"/>
</dbReference>
<dbReference type="VEuPathDB" id="HostDB:ENSMUSG00000047797"/>
<dbReference type="eggNOG" id="ENOG502R1QN">
    <property type="taxonomic scope" value="Eukaryota"/>
</dbReference>
<dbReference type="GeneTree" id="ENSGT01030000234513"/>
<dbReference type="HOGENOM" id="CLU_037388_4_1_1"/>
<dbReference type="InParanoid" id="P28230"/>
<dbReference type="OMA" id="CIILNMA"/>
<dbReference type="OrthoDB" id="8934037at2759"/>
<dbReference type="PhylomeDB" id="P28230"/>
<dbReference type="TreeFam" id="TF329606"/>
<dbReference type="Reactome" id="R-MMU-190704">
    <property type="pathway name" value="Oligomerization of connexins into connexons"/>
</dbReference>
<dbReference type="BioGRID-ORCS" id="14618">
    <property type="hits" value="0 hits in 78 CRISPR screens"/>
</dbReference>
<dbReference type="ChiTaRS" id="Gjb1">
    <property type="organism name" value="mouse"/>
</dbReference>
<dbReference type="PRO" id="PR:P28230"/>
<dbReference type="Proteomes" id="UP000000589">
    <property type="component" value="Chromosome X"/>
</dbReference>
<dbReference type="RNAct" id="P28230">
    <property type="molecule type" value="protein"/>
</dbReference>
<dbReference type="Bgee" id="ENSMUSG00000047797">
    <property type="expression patterns" value="Expressed in left lobe of liver and 112 other cell types or tissues"/>
</dbReference>
<dbReference type="ExpressionAtlas" id="P28230">
    <property type="expression patterns" value="baseline and differential"/>
</dbReference>
<dbReference type="GO" id="GO:0005922">
    <property type="term" value="C:connexin complex"/>
    <property type="evidence" value="ECO:0007669"/>
    <property type="project" value="InterPro"/>
</dbReference>
<dbReference type="GO" id="GO:0005737">
    <property type="term" value="C:cytoplasm"/>
    <property type="evidence" value="ECO:0000314"/>
    <property type="project" value="MGI"/>
</dbReference>
<dbReference type="GO" id="GO:0005921">
    <property type="term" value="C:gap junction"/>
    <property type="evidence" value="ECO:0000314"/>
    <property type="project" value="MGI"/>
</dbReference>
<dbReference type="GO" id="GO:0005886">
    <property type="term" value="C:plasma membrane"/>
    <property type="evidence" value="ECO:0000314"/>
    <property type="project" value="MGI"/>
</dbReference>
<dbReference type="GO" id="GO:0042802">
    <property type="term" value="F:identical protein binding"/>
    <property type="evidence" value="ECO:0000353"/>
    <property type="project" value="MGI"/>
</dbReference>
<dbReference type="GO" id="GO:0007154">
    <property type="term" value="P:cell communication"/>
    <property type="evidence" value="ECO:0007669"/>
    <property type="project" value="InterPro"/>
</dbReference>
<dbReference type="FunFam" id="1.20.1440.80:FF:000001">
    <property type="entry name" value="Gap junction alpha-1"/>
    <property type="match status" value="1"/>
</dbReference>
<dbReference type="Gene3D" id="1.20.1440.80">
    <property type="entry name" value="Gap junction channel protein cysteine-rich domain"/>
    <property type="match status" value="1"/>
</dbReference>
<dbReference type="InterPro" id="IPR000500">
    <property type="entry name" value="Connexin"/>
</dbReference>
<dbReference type="InterPro" id="IPR002267">
    <property type="entry name" value="Connexin32"/>
</dbReference>
<dbReference type="InterPro" id="IPR019570">
    <property type="entry name" value="Connexin_CCC"/>
</dbReference>
<dbReference type="InterPro" id="IPR017990">
    <property type="entry name" value="Connexin_CS"/>
</dbReference>
<dbReference type="InterPro" id="IPR013092">
    <property type="entry name" value="Connexin_N"/>
</dbReference>
<dbReference type="InterPro" id="IPR038359">
    <property type="entry name" value="Connexin_N_sf"/>
</dbReference>
<dbReference type="PANTHER" id="PTHR11984">
    <property type="entry name" value="CONNEXIN"/>
    <property type="match status" value="1"/>
</dbReference>
<dbReference type="PANTHER" id="PTHR11984:SF20">
    <property type="entry name" value="GAP JUNCTION BETA-1 PROTEIN"/>
    <property type="match status" value="1"/>
</dbReference>
<dbReference type="Pfam" id="PF00029">
    <property type="entry name" value="Connexin"/>
    <property type="match status" value="1"/>
</dbReference>
<dbReference type="PRINTS" id="PR00206">
    <property type="entry name" value="CONNEXIN"/>
</dbReference>
<dbReference type="PRINTS" id="PR01138">
    <property type="entry name" value="CONNEXINB1"/>
</dbReference>
<dbReference type="SMART" id="SM00037">
    <property type="entry name" value="CNX"/>
    <property type="match status" value="1"/>
</dbReference>
<dbReference type="SMART" id="SM01089">
    <property type="entry name" value="Connexin_CCC"/>
    <property type="match status" value="1"/>
</dbReference>
<dbReference type="PROSITE" id="PS00407">
    <property type="entry name" value="CONNEXINS_1"/>
    <property type="match status" value="1"/>
</dbReference>
<dbReference type="PROSITE" id="PS00408">
    <property type="entry name" value="CONNEXINS_2"/>
    <property type="match status" value="1"/>
</dbReference>
<organism>
    <name type="scientific">Mus musculus</name>
    <name type="common">Mouse</name>
    <dbReference type="NCBI Taxonomy" id="10090"/>
    <lineage>
        <taxon>Eukaryota</taxon>
        <taxon>Metazoa</taxon>
        <taxon>Chordata</taxon>
        <taxon>Craniata</taxon>
        <taxon>Vertebrata</taxon>
        <taxon>Euteleostomi</taxon>
        <taxon>Mammalia</taxon>
        <taxon>Eutheria</taxon>
        <taxon>Euarchontoglires</taxon>
        <taxon>Glires</taxon>
        <taxon>Rodentia</taxon>
        <taxon>Myomorpha</taxon>
        <taxon>Muroidea</taxon>
        <taxon>Muridae</taxon>
        <taxon>Murinae</taxon>
        <taxon>Mus</taxon>
        <taxon>Mus</taxon>
    </lineage>
</organism>
<name>CXB1_MOUSE</name>